<name>EX7L_BREBN</name>
<sequence>MALQDILSVSDLNRYIKLVLEKEPHLQDIWVRGEISNFTHHSSGHMYFTLKDKQSRIKVVMFASYNRFLRFLPKDGAKAIVRGSISAYERDGAYQFYAKEMQPDGLGSLYLAFEQLKEKLAQEGLFAAERKRMLPRFPKRVGVVTSPTGAAIRDICTTIRRRYPQAEIVLSPAVVQGADAPASIVSAIRIMNDQPDIDVLIVGRGGGSIEELWAFNDENVARAIATSLIPVISAVGHETDVTIADFVADVRAATPTAAAELAVPHYLEWVERVRQLEIRMHRAVRGTMTEQRNRLTRLGNSYAMRQPERRLEEAAERLDRAHLRMRQSMKHLLDRRRERYTRLDEQIKRYRLADQIGEKRKNLSKLRATLDERMLGRLNQKRMAFAARIATLEALSPLKVMQRGFSLVYTNDRLVKSVEQFAPGDEIMVRLSDGSATARVEKVNREEEKQSGSQKNGTRD</sequence>
<reference key="1">
    <citation type="submission" date="2005-03" db="EMBL/GenBank/DDBJ databases">
        <title>Brevibacillus brevis strain 47, complete genome.</title>
        <authorList>
            <person name="Hosoyama A."/>
            <person name="Yamada R."/>
            <person name="Hongo Y."/>
            <person name="Terui Y."/>
            <person name="Ankai A."/>
            <person name="Masuyama W."/>
            <person name="Sekiguchi M."/>
            <person name="Takeda T."/>
            <person name="Asano K."/>
            <person name="Ohji S."/>
            <person name="Ichikawa N."/>
            <person name="Narita S."/>
            <person name="Aoki N."/>
            <person name="Miura H."/>
            <person name="Matsushita S."/>
            <person name="Sekigawa T."/>
            <person name="Yamagata H."/>
            <person name="Yoshikawa H."/>
            <person name="Udaka S."/>
            <person name="Tanikawa S."/>
            <person name="Fujita N."/>
        </authorList>
    </citation>
    <scope>NUCLEOTIDE SEQUENCE [LARGE SCALE GENOMIC DNA]</scope>
    <source>
        <strain>47 / JCM 6285 / NBRC 100599</strain>
    </source>
</reference>
<organism>
    <name type="scientific">Brevibacillus brevis (strain 47 / JCM 6285 / NBRC 100599)</name>
    <dbReference type="NCBI Taxonomy" id="358681"/>
    <lineage>
        <taxon>Bacteria</taxon>
        <taxon>Bacillati</taxon>
        <taxon>Bacillota</taxon>
        <taxon>Bacilli</taxon>
        <taxon>Bacillales</taxon>
        <taxon>Paenibacillaceae</taxon>
        <taxon>Brevibacillus</taxon>
    </lineage>
</organism>
<feature type="chain" id="PRO_1000200661" description="Exodeoxyribonuclease 7 large subunit">
    <location>
        <begin position="1"/>
        <end position="460"/>
    </location>
</feature>
<feature type="region of interest" description="Disordered" evidence="2">
    <location>
        <begin position="438"/>
        <end position="460"/>
    </location>
</feature>
<feature type="compositionally biased region" description="Basic and acidic residues" evidence="2">
    <location>
        <begin position="439"/>
        <end position="450"/>
    </location>
</feature>
<feature type="compositionally biased region" description="Polar residues" evidence="2">
    <location>
        <begin position="451"/>
        <end position="460"/>
    </location>
</feature>
<gene>
    <name evidence="1" type="primary">xseA</name>
    <name type="ordered locus">BBR47_23380</name>
</gene>
<protein>
    <recommendedName>
        <fullName evidence="1">Exodeoxyribonuclease 7 large subunit</fullName>
        <ecNumber evidence="1">3.1.11.6</ecNumber>
    </recommendedName>
    <alternativeName>
        <fullName evidence="1">Exodeoxyribonuclease VII large subunit</fullName>
        <shortName evidence="1">Exonuclease VII large subunit</shortName>
    </alternativeName>
</protein>
<evidence type="ECO:0000255" key="1">
    <source>
        <dbReference type="HAMAP-Rule" id="MF_00378"/>
    </source>
</evidence>
<evidence type="ECO:0000256" key="2">
    <source>
        <dbReference type="SAM" id="MobiDB-lite"/>
    </source>
</evidence>
<proteinExistence type="inferred from homology"/>
<keyword id="KW-0963">Cytoplasm</keyword>
<keyword id="KW-0269">Exonuclease</keyword>
<keyword id="KW-0378">Hydrolase</keyword>
<keyword id="KW-0540">Nuclease</keyword>
<keyword id="KW-1185">Reference proteome</keyword>
<dbReference type="EC" id="3.1.11.6" evidence="1"/>
<dbReference type="EMBL" id="AP008955">
    <property type="protein sequence ID" value="BAH43315.1"/>
    <property type="molecule type" value="Genomic_DNA"/>
</dbReference>
<dbReference type="RefSeq" id="WP_012686033.1">
    <property type="nucleotide sequence ID" value="NC_012491.1"/>
</dbReference>
<dbReference type="SMR" id="C0ZC06"/>
<dbReference type="STRING" id="358681.BBR47_23380"/>
<dbReference type="KEGG" id="bbe:BBR47_23380"/>
<dbReference type="eggNOG" id="COG1570">
    <property type="taxonomic scope" value="Bacteria"/>
</dbReference>
<dbReference type="HOGENOM" id="CLU_023625_3_1_9"/>
<dbReference type="Proteomes" id="UP000001877">
    <property type="component" value="Chromosome"/>
</dbReference>
<dbReference type="GO" id="GO:0005737">
    <property type="term" value="C:cytoplasm"/>
    <property type="evidence" value="ECO:0007669"/>
    <property type="project" value="UniProtKB-SubCell"/>
</dbReference>
<dbReference type="GO" id="GO:0009318">
    <property type="term" value="C:exodeoxyribonuclease VII complex"/>
    <property type="evidence" value="ECO:0007669"/>
    <property type="project" value="InterPro"/>
</dbReference>
<dbReference type="GO" id="GO:0008855">
    <property type="term" value="F:exodeoxyribonuclease VII activity"/>
    <property type="evidence" value="ECO:0007669"/>
    <property type="project" value="UniProtKB-UniRule"/>
</dbReference>
<dbReference type="GO" id="GO:0003676">
    <property type="term" value="F:nucleic acid binding"/>
    <property type="evidence" value="ECO:0007669"/>
    <property type="project" value="InterPro"/>
</dbReference>
<dbReference type="GO" id="GO:0006308">
    <property type="term" value="P:DNA catabolic process"/>
    <property type="evidence" value="ECO:0007669"/>
    <property type="project" value="UniProtKB-UniRule"/>
</dbReference>
<dbReference type="CDD" id="cd04489">
    <property type="entry name" value="ExoVII_LU_OBF"/>
    <property type="match status" value="1"/>
</dbReference>
<dbReference type="HAMAP" id="MF_00378">
    <property type="entry name" value="Exonuc_7_L"/>
    <property type="match status" value="1"/>
</dbReference>
<dbReference type="InterPro" id="IPR003753">
    <property type="entry name" value="Exonuc_VII_L"/>
</dbReference>
<dbReference type="InterPro" id="IPR020579">
    <property type="entry name" value="Exonuc_VII_lsu_C"/>
</dbReference>
<dbReference type="InterPro" id="IPR025824">
    <property type="entry name" value="OB-fold_nuc-bd_dom"/>
</dbReference>
<dbReference type="NCBIfam" id="TIGR00237">
    <property type="entry name" value="xseA"/>
    <property type="match status" value="1"/>
</dbReference>
<dbReference type="PANTHER" id="PTHR30008">
    <property type="entry name" value="EXODEOXYRIBONUCLEASE 7 LARGE SUBUNIT"/>
    <property type="match status" value="1"/>
</dbReference>
<dbReference type="PANTHER" id="PTHR30008:SF0">
    <property type="entry name" value="EXODEOXYRIBONUCLEASE 7 LARGE SUBUNIT"/>
    <property type="match status" value="1"/>
</dbReference>
<dbReference type="Pfam" id="PF02601">
    <property type="entry name" value="Exonuc_VII_L"/>
    <property type="match status" value="1"/>
</dbReference>
<dbReference type="Pfam" id="PF13742">
    <property type="entry name" value="tRNA_anti_2"/>
    <property type="match status" value="1"/>
</dbReference>
<comment type="function">
    <text evidence="1">Bidirectionally degrades single-stranded DNA into large acid-insoluble oligonucleotides, which are then degraded further into small acid-soluble oligonucleotides.</text>
</comment>
<comment type="catalytic activity">
    <reaction evidence="1">
        <text>Exonucleolytic cleavage in either 5'- to 3'- or 3'- to 5'-direction to yield nucleoside 5'-phosphates.</text>
        <dbReference type="EC" id="3.1.11.6"/>
    </reaction>
</comment>
<comment type="subunit">
    <text evidence="1">Heterooligomer composed of large and small subunits.</text>
</comment>
<comment type="subcellular location">
    <subcellularLocation>
        <location evidence="1">Cytoplasm</location>
    </subcellularLocation>
</comment>
<comment type="similarity">
    <text evidence="1">Belongs to the XseA family.</text>
</comment>
<accession>C0ZC06</accession>